<name>LRC42_HUMAN</name>
<evidence type="ECO:0000250" key="1">
    <source>
        <dbReference type="UniProtKB" id="Q8R2U7"/>
    </source>
</evidence>
<evidence type="ECO:0000256" key="2">
    <source>
        <dbReference type="SAM" id="MobiDB-lite"/>
    </source>
</evidence>
<evidence type="ECO:0000305" key="3"/>
<evidence type="ECO:0007744" key="4">
    <source>
    </source>
</evidence>
<sequence length="428" mass="48571">MSYYLSSENHLDPGPIYMRENGQLHMVNLALDGVRSSLQKPRPFRLFPKGFSVELCMNREDDTARKEKTDHFIFTYTREGNLRYSAKSLFSLVLGFISDNVDHIDSLIGFPEQIAEKLFSAAEARQKFTEPGAGLRALQKFTEAYGSLVLCSLCLRNRYLVISEKLEEIKSFRELTCLDLSCCKLGDEHELLEHLTNEALSSVTQLHLKDNCLSDAGVRKMTAPVRVMKRGLENLTLLDLSCNPEITDAGIGYLFSFRKLNCLDISGTGLKDIKTVKHKLQTHIGLVHSKVPLKEFDHSNCKTEGWADQIVLQWERVTAEAVKPRETSEPRAAAQRFYGKRSRAEAPLKCPLADTHMNSSEKLQFYKEKAPDCHGPVLKHEAISSQESKKSKKRPFEESETEQNNSSQPSKQKYVCLAVEDWDLLNSY</sequence>
<keyword id="KW-0433">Leucine-rich repeat</keyword>
<keyword id="KW-0597">Phosphoprotein</keyword>
<keyword id="KW-1267">Proteomics identification</keyword>
<keyword id="KW-1185">Reference proteome</keyword>
<keyword id="KW-0677">Repeat</keyword>
<proteinExistence type="evidence at protein level"/>
<accession>Q9Y546</accession>
<accession>D3DQ46</accession>
<accession>Q8N2Q8</accession>
<gene>
    <name type="primary">LRRC42</name>
</gene>
<protein>
    <recommendedName>
        <fullName>Leucine-rich repeat-containing protein 42</fullName>
    </recommendedName>
</protein>
<organism>
    <name type="scientific">Homo sapiens</name>
    <name type="common">Human</name>
    <dbReference type="NCBI Taxonomy" id="9606"/>
    <lineage>
        <taxon>Eukaryota</taxon>
        <taxon>Metazoa</taxon>
        <taxon>Chordata</taxon>
        <taxon>Craniata</taxon>
        <taxon>Vertebrata</taxon>
        <taxon>Euteleostomi</taxon>
        <taxon>Mammalia</taxon>
        <taxon>Eutheria</taxon>
        <taxon>Euarchontoglires</taxon>
        <taxon>Primates</taxon>
        <taxon>Haplorrhini</taxon>
        <taxon>Catarrhini</taxon>
        <taxon>Hominidae</taxon>
        <taxon>Homo</taxon>
    </lineage>
</organism>
<reference key="1">
    <citation type="journal article" date="2004" name="Nat. Genet.">
        <title>Complete sequencing and characterization of 21,243 full-length human cDNAs.</title>
        <authorList>
            <person name="Ota T."/>
            <person name="Suzuki Y."/>
            <person name="Nishikawa T."/>
            <person name="Otsuki T."/>
            <person name="Sugiyama T."/>
            <person name="Irie R."/>
            <person name="Wakamatsu A."/>
            <person name="Hayashi K."/>
            <person name="Sato H."/>
            <person name="Nagai K."/>
            <person name="Kimura K."/>
            <person name="Makita H."/>
            <person name="Sekine M."/>
            <person name="Obayashi M."/>
            <person name="Nishi T."/>
            <person name="Shibahara T."/>
            <person name="Tanaka T."/>
            <person name="Ishii S."/>
            <person name="Yamamoto J."/>
            <person name="Saito K."/>
            <person name="Kawai Y."/>
            <person name="Isono Y."/>
            <person name="Nakamura Y."/>
            <person name="Nagahari K."/>
            <person name="Murakami K."/>
            <person name="Yasuda T."/>
            <person name="Iwayanagi T."/>
            <person name="Wagatsuma M."/>
            <person name="Shiratori A."/>
            <person name="Sudo H."/>
            <person name="Hosoiri T."/>
            <person name="Kaku Y."/>
            <person name="Kodaira H."/>
            <person name="Kondo H."/>
            <person name="Sugawara M."/>
            <person name="Takahashi M."/>
            <person name="Kanda K."/>
            <person name="Yokoi T."/>
            <person name="Furuya T."/>
            <person name="Kikkawa E."/>
            <person name="Omura Y."/>
            <person name="Abe K."/>
            <person name="Kamihara K."/>
            <person name="Katsuta N."/>
            <person name="Sato K."/>
            <person name="Tanikawa M."/>
            <person name="Yamazaki M."/>
            <person name="Ninomiya K."/>
            <person name="Ishibashi T."/>
            <person name="Yamashita H."/>
            <person name="Murakawa K."/>
            <person name="Fujimori K."/>
            <person name="Tanai H."/>
            <person name="Kimata M."/>
            <person name="Watanabe M."/>
            <person name="Hiraoka S."/>
            <person name="Chiba Y."/>
            <person name="Ishida S."/>
            <person name="Ono Y."/>
            <person name="Takiguchi S."/>
            <person name="Watanabe S."/>
            <person name="Yosida M."/>
            <person name="Hotuta T."/>
            <person name="Kusano J."/>
            <person name="Kanehori K."/>
            <person name="Takahashi-Fujii A."/>
            <person name="Hara H."/>
            <person name="Tanase T.-O."/>
            <person name="Nomura Y."/>
            <person name="Togiya S."/>
            <person name="Komai F."/>
            <person name="Hara R."/>
            <person name="Takeuchi K."/>
            <person name="Arita M."/>
            <person name="Imose N."/>
            <person name="Musashino K."/>
            <person name="Yuuki H."/>
            <person name="Oshima A."/>
            <person name="Sasaki N."/>
            <person name="Aotsuka S."/>
            <person name="Yoshikawa Y."/>
            <person name="Matsunawa H."/>
            <person name="Ichihara T."/>
            <person name="Shiohata N."/>
            <person name="Sano S."/>
            <person name="Moriya S."/>
            <person name="Momiyama H."/>
            <person name="Satoh N."/>
            <person name="Takami S."/>
            <person name="Terashima Y."/>
            <person name="Suzuki O."/>
            <person name="Nakagawa S."/>
            <person name="Senoh A."/>
            <person name="Mizoguchi H."/>
            <person name="Goto Y."/>
            <person name="Shimizu F."/>
            <person name="Wakebe H."/>
            <person name="Hishigaki H."/>
            <person name="Watanabe T."/>
            <person name="Sugiyama A."/>
            <person name="Takemoto M."/>
            <person name="Kawakami B."/>
            <person name="Yamazaki M."/>
            <person name="Watanabe K."/>
            <person name="Kumagai A."/>
            <person name="Itakura S."/>
            <person name="Fukuzumi Y."/>
            <person name="Fujimori Y."/>
            <person name="Komiyama M."/>
            <person name="Tashiro H."/>
            <person name="Tanigami A."/>
            <person name="Fujiwara T."/>
            <person name="Ono T."/>
            <person name="Yamada K."/>
            <person name="Fujii Y."/>
            <person name="Ozaki K."/>
            <person name="Hirao M."/>
            <person name="Ohmori Y."/>
            <person name="Kawabata A."/>
            <person name="Hikiji T."/>
            <person name="Kobatake N."/>
            <person name="Inagaki H."/>
            <person name="Ikema Y."/>
            <person name="Okamoto S."/>
            <person name="Okitani R."/>
            <person name="Kawakami T."/>
            <person name="Noguchi S."/>
            <person name="Itoh T."/>
            <person name="Shigeta K."/>
            <person name="Senba T."/>
            <person name="Matsumura K."/>
            <person name="Nakajima Y."/>
            <person name="Mizuno T."/>
            <person name="Morinaga M."/>
            <person name="Sasaki M."/>
            <person name="Togashi T."/>
            <person name="Oyama M."/>
            <person name="Hata H."/>
            <person name="Watanabe M."/>
            <person name="Komatsu T."/>
            <person name="Mizushima-Sugano J."/>
            <person name="Satoh T."/>
            <person name="Shirai Y."/>
            <person name="Takahashi Y."/>
            <person name="Nakagawa K."/>
            <person name="Okumura K."/>
            <person name="Nagase T."/>
            <person name="Nomura N."/>
            <person name="Kikuchi H."/>
            <person name="Masuho Y."/>
            <person name="Yamashita R."/>
            <person name="Nakai K."/>
            <person name="Yada T."/>
            <person name="Nakamura Y."/>
            <person name="Ohara O."/>
            <person name="Isogai T."/>
            <person name="Sugano S."/>
        </authorList>
    </citation>
    <scope>NUCLEOTIDE SEQUENCE [LARGE SCALE MRNA]</scope>
    <source>
        <tissue>Embryo</tissue>
    </source>
</reference>
<reference key="2">
    <citation type="journal article" date="2005" name="DNA Res.">
        <title>Signal sequence and keyword trap in silico for selection of full-length human cDNAs encoding secretion or membrane proteins from oligo-capped cDNA libraries.</title>
        <authorList>
            <person name="Otsuki T."/>
            <person name="Ota T."/>
            <person name="Nishikawa T."/>
            <person name="Hayashi K."/>
            <person name="Suzuki Y."/>
            <person name="Yamamoto J."/>
            <person name="Wakamatsu A."/>
            <person name="Kimura K."/>
            <person name="Sakamoto K."/>
            <person name="Hatano N."/>
            <person name="Kawai Y."/>
            <person name="Ishii S."/>
            <person name="Saito K."/>
            <person name="Kojima S."/>
            <person name="Sugiyama T."/>
            <person name="Ono T."/>
            <person name="Okano K."/>
            <person name="Yoshikawa Y."/>
            <person name="Aotsuka S."/>
            <person name="Sasaki N."/>
            <person name="Hattori A."/>
            <person name="Okumura K."/>
            <person name="Nagai K."/>
            <person name="Sugano S."/>
            <person name="Isogai T."/>
        </authorList>
    </citation>
    <scope>NUCLEOTIDE SEQUENCE [LARGE SCALE MRNA]</scope>
    <source>
        <tissue>Placenta</tissue>
    </source>
</reference>
<reference key="3">
    <citation type="submission" date="2005-09" db="EMBL/GenBank/DDBJ databases">
        <authorList>
            <person name="Mural R.J."/>
            <person name="Istrail S."/>
            <person name="Sutton G.G."/>
            <person name="Florea L."/>
            <person name="Halpern A.L."/>
            <person name="Mobarry C.M."/>
            <person name="Lippert R."/>
            <person name="Walenz B."/>
            <person name="Shatkay H."/>
            <person name="Dew I."/>
            <person name="Miller J.R."/>
            <person name="Flanigan M.J."/>
            <person name="Edwards N.J."/>
            <person name="Bolanos R."/>
            <person name="Fasulo D."/>
            <person name="Halldorsson B.V."/>
            <person name="Hannenhalli S."/>
            <person name="Turner R."/>
            <person name="Yooseph S."/>
            <person name="Lu F."/>
            <person name="Nusskern D.R."/>
            <person name="Shue B.C."/>
            <person name="Zheng X.H."/>
            <person name="Zhong F."/>
            <person name="Delcher A.L."/>
            <person name="Huson D.H."/>
            <person name="Kravitz S.A."/>
            <person name="Mouchard L."/>
            <person name="Reinert K."/>
            <person name="Remington K.A."/>
            <person name="Clark A.G."/>
            <person name="Waterman M.S."/>
            <person name="Eichler E.E."/>
            <person name="Adams M.D."/>
            <person name="Hunkapiller M.W."/>
            <person name="Myers E.W."/>
            <person name="Venter J.C."/>
        </authorList>
    </citation>
    <scope>NUCLEOTIDE SEQUENCE [LARGE SCALE GENOMIC DNA]</scope>
</reference>
<reference key="4">
    <citation type="journal article" date="2004" name="Genome Res.">
        <title>The status, quality, and expansion of the NIH full-length cDNA project: the Mammalian Gene Collection (MGC).</title>
        <authorList>
            <consortium name="The MGC Project Team"/>
        </authorList>
    </citation>
    <scope>NUCLEOTIDE SEQUENCE [LARGE SCALE MRNA]</scope>
    <source>
        <tissue>Skin</tissue>
    </source>
</reference>
<reference key="5">
    <citation type="journal article" date="2007" name="Science">
        <title>ATM and ATR substrate analysis reveals extensive protein networks responsive to DNA damage.</title>
        <authorList>
            <person name="Matsuoka S."/>
            <person name="Ballif B.A."/>
            <person name="Smogorzewska A."/>
            <person name="McDonald E.R. III"/>
            <person name="Hurov K.E."/>
            <person name="Luo J."/>
            <person name="Bakalarski C.E."/>
            <person name="Zhao Z."/>
            <person name="Solimini N."/>
            <person name="Lerenthal Y."/>
            <person name="Shiloh Y."/>
            <person name="Gygi S.P."/>
            <person name="Elledge S.J."/>
        </authorList>
    </citation>
    <scope>PHOSPHORYLATION [LARGE SCALE ANALYSIS] AT SER-407</scope>
    <scope>IDENTIFICATION BY MASS SPECTROMETRY [LARGE SCALE ANALYSIS]</scope>
    <source>
        <tissue>Embryonic kidney</tissue>
    </source>
</reference>
<comment type="similarity">
    <text evidence="3">Belongs to the LRRC42 family.</text>
</comment>
<feature type="chain" id="PRO_0000223622" description="Leucine-rich repeat-containing protein 42">
    <location>
        <begin position="1"/>
        <end position="428"/>
    </location>
</feature>
<feature type="repeat" description="LRR 1">
    <location>
        <begin position="149"/>
        <end position="170"/>
    </location>
</feature>
<feature type="repeat" description="LRR 2">
    <location>
        <begin position="174"/>
        <end position="195"/>
    </location>
</feature>
<feature type="repeat" description="LRR 3">
    <location>
        <begin position="202"/>
        <end position="222"/>
    </location>
</feature>
<feature type="repeat" description="LRR 4">
    <location>
        <begin position="234"/>
        <end position="255"/>
    </location>
</feature>
<feature type="repeat" description="LRR 5">
    <location>
        <begin position="259"/>
        <end position="280"/>
    </location>
</feature>
<feature type="region of interest" description="Disordered" evidence="2">
    <location>
        <begin position="379"/>
        <end position="412"/>
    </location>
</feature>
<feature type="modified residue" description="Phosphoserine" evidence="1">
    <location>
        <position position="406"/>
    </location>
</feature>
<feature type="modified residue" description="Phosphoserine" evidence="4">
    <location>
        <position position="407"/>
    </location>
</feature>
<feature type="sequence conflict" description="In Ref. 1; BAC11038." evidence="3" ref="1">
    <original>K</original>
    <variation>R</variation>
    <location>
        <position position="362"/>
    </location>
</feature>
<feature type="sequence conflict" description="In Ref. 1; BAC11038." evidence="3" ref="1">
    <original>P</original>
    <variation>S</variation>
    <location>
        <position position="395"/>
    </location>
</feature>
<feature type="sequence conflict" description="In Ref. 1." evidence="3" ref="1">
    <original>KYVCLAVEDWDLLNSY</original>
    <variation>IFLLLWCGRGMLWKYVIISNVYFQYIVIFSNKHFCCP</variation>
    <location>
        <begin position="413"/>
        <end position="428"/>
    </location>
</feature>
<dbReference type="EMBL" id="AK075201">
    <property type="protein sequence ID" value="BAC11466.1"/>
    <property type="status" value="ALT_TERM"/>
    <property type="molecule type" value="mRNA"/>
</dbReference>
<dbReference type="EMBL" id="AK074521">
    <property type="protein sequence ID" value="BAC11038.1"/>
    <property type="molecule type" value="mRNA"/>
</dbReference>
<dbReference type="EMBL" id="CH471059">
    <property type="protein sequence ID" value="EAX06713.1"/>
    <property type="molecule type" value="Genomic_DNA"/>
</dbReference>
<dbReference type="EMBL" id="CH471059">
    <property type="protein sequence ID" value="EAX06714.1"/>
    <property type="molecule type" value="Genomic_DNA"/>
</dbReference>
<dbReference type="EMBL" id="CH471059">
    <property type="protein sequence ID" value="EAX06715.1"/>
    <property type="molecule type" value="Genomic_DNA"/>
</dbReference>
<dbReference type="EMBL" id="BC013101">
    <property type="protein sequence ID" value="AAH13101.1"/>
    <property type="molecule type" value="mRNA"/>
</dbReference>
<dbReference type="CCDS" id="CCDS585.1"/>
<dbReference type="RefSeq" id="NP_001243338.1">
    <property type="nucleotide sequence ID" value="NM_001256409.2"/>
</dbReference>
<dbReference type="RefSeq" id="NP_443172.1">
    <property type="nucleotide sequence ID" value="NM_052940.5"/>
</dbReference>
<dbReference type="RefSeq" id="XP_006710390.1">
    <property type="nucleotide sequence ID" value="XM_006710327.3"/>
</dbReference>
<dbReference type="RefSeq" id="XP_006710391.1">
    <property type="nucleotide sequence ID" value="XM_006710328.5"/>
</dbReference>
<dbReference type="RefSeq" id="XP_054190136.1">
    <property type="nucleotide sequence ID" value="XM_054334161.1"/>
</dbReference>
<dbReference type="RefSeq" id="XP_054190137.1">
    <property type="nucleotide sequence ID" value="XM_054334162.1"/>
</dbReference>
<dbReference type="BioGRID" id="125429">
    <property type="interactions" value="21"/>
</dbReference>
<dbReference type="FunCoup" id="Q9Y546">
    <property type="interactions" value="891"/>
</dbReference>
<dbReference type="IntAct" id="Q9Y546">
    <property type="interactions" value="8"/>
</dbReference>
<dbReference type="MINT" id="Q9Y546"/>
<dbReference type="STRING" id="9606.ENSP00000360421"/>
<dbReference type="iPTMnet" id="Q9Y546"/>
<dbReference type="PhosphoSitePlus" id="Q9Y546"/>
<dbReference type="BioMuta" id="LRRC42"/>
<dbReference type="DMDM" id="74762064"/>
<dbReference type="jPOST" id="Q9Y546"/>
<dbReference type="MassIVE" id="Q9Y546"/>
<dbReference type="PaxDb" id="9606-ENSP00000360421"/>
<dbReference type="PeptideAtlas" id="Q9Y546"/>
<dbReference type="ProteomicsDB" id="86287"/>
<dbReference type="Pumba" id="Q9Y546"/>
<dbReference type="Antibodypedia" id="46891">
    <property type="antibodies" value="119 antibodies from 21 providers"/>
</dbReference>
<dbReference type="DNASU" id="115353"/>
<dbReference type="Ensembl" id="ENST00000319223.8">
    <property type="protein sequence ID" value="ENSP00000318185.4"/>
    <property type="gene ID" value="ENSG00000116212.16"/>
</dbReference>
<dbReference type="Ensembl" id="ENST00000371370.8">
    <property type="protein sequence ID" value="ENSP00000360421.3"/>
    <property type="gene ID" value="ENSG00000116212.16"/>
</dbReference>
<dbReference type="Ensembl" id="ENST00000713564.1">
    <property type="protein sequence ID" value="ENSP00000518857.1"/>
    <property type="gene ID" value="ENSG00000116212.16"/>
</dbReference>
<dbReference type="GeneID" id="115353"/>
<dbReference type="KEGG" id="hsa:115353"/>
<dbReference type="MANE-Select" id="ENST00000371370.8">
    <property type="protein sequence ID" value="ENSP00000360421.3"/>
    <property type="RefSeq nucleotide sequence ID" value="NM_001256409.2"/>
    <property type="RefSeq protein sequence ID" value="NP_001243338.1"/>
</dbReference>
<dbReference type="UCSC" id="uc001cwj.3">
    <property type="organism name" value="human"/>
</dbReference>
<dbReference type="AGR" id="HGNC:28792"/>
<dbReference type="CTD" id="115353"/>
<dbReference type="DisGeNET" id="115353"/>
<dbReference type="GeneCards" id="LRRC42"/>
<dbReference type="HGNC" id="HGNC:28792">
    <property type="gene designation" value="LRRC42"/>
</dbReference>
<dbReference type="HPA" id="ENSG00000116212">
    <property type="expression patterns" value="Low tissue specificity"/>
</dbReference>
<dbReference type="MIM" id="620896">
    <property type="type" value="gene"/>
</dbReference>
<dbReference type="neXtProt" id="NX_Q9Y546"/>
<dbReference type="OpenTargets" id="ENSG00000116212"/>
<dbReference type="PharmGKB" id="PA142671530"/>
<dbReference type="VEuPathDB" id="HostDB:ENSG00000116212"/>
<dbReference type="eggNOG" id="ENOG502QQJZ">
    <property type="taxonomic scope" value="Eukaryota"/>
</dbReference>
<dbReference type="GeneTree" id="ENSGT00390000002727"/>
<dbReference type="InParanoid" id="Q9Y546"/>
<dbReference type="OMA" id="FYGKTHR"/>
<dbReference type="OrthoDB" id="120976at2759"/>
<dbReference type="PAN-GO" id="Q9Y546">
    <property type="GO annotations" value="0 GO annotations based on evolutionary models"/>
</dbReference>
<dbReference type="PhylomeDB" id="Q9Y546"/>
<dbReference type="TreeFam" id="TF331102"/>
<dbReference type="PathwayCommons" id="Q9Y546"/>
<dbReference type="SignaLink" id="Q9Y546"/>
<dbReference type="BioGRID-ORCS" id="115353">
    <property type="hits" value="13 hits in 1154 CRISPR screens"/>
</dbReference>
<dbReference type="GenomeRNAi" id="115353"/>
<dbReference type="Pharos" id="Q9Y546">
    <property type="development level" value="Tdark"/>
</dbReference>
<dbReference type="PRO" id="PR:Q9Y546"/>
<dbReference type="Proteomes" id="UP000005640">
    <property type="component" value="Chromosome 1"/>
</dbReference>
<dbReference type="RNAct" id="Q9Y546">
    <property type="molecule type" value="protein"/>
</dbReference>
<dbReference type="Bgee" id="ENSG00000116212">
    <property type="expression patterns" value="Expressed in oocyte and 142 other cell types or tissues"/>
</dbReference>
<dbReference type="ExpressionAtlas" id="Q9Y546">
    <property type="expression patterns" value="baseline and differential"/>
</dbReference>
<dbReference type="Gene3D" id="3.80.10.10">
    <property type="entry name" value="Ribonuclease Inhibitor"/>
    <property type="match status" value="1"/>
</dbReference>
<dbReference type="InterPro" id="IPR001611">
    <property type="entry name" value="Leu-rich_rpt"/>
</dbReference>
<dbReference type="InterPro" id="IPR032675">
    <property type="entry name" value="LRR_dom_sf"/>
</dbReference>
<dbReference type="InterPro" id="IPR039631">
    <property type="entry name" value="LRRC42"/>
</dbReference>
<dbReference type="PANTHER" id="PTHR31994">
    <property type="entry name" value="LEUCINE-RICH REPEAT-CONTAINING PROTEIN 42"/>
    <property type="match status" value="1"/>
</dbReference>
<dbReference type="PANTHER" id="PTHR31994:SF3">
    <property type="entry name" value="LEUCINE-RICH REPEAT-CONTAINING PROTEIN 42"/>
    <property type="match status" value="1"/>
</dbReference>
<dbReference type="Pfam" id="PF13516">
    <property type="entry name" value="LRR_6"/>
    <property type="match status" value="3"/>
</dbReference>
<dbReference type="SUPFAM" id="SSF52047">
    <property type="entry name" value="RNI-like"/>
    <property type="match status" value="1"/>
</dbReference>